<protein>
    <recommendedName>
        <fullName evidence="1">Adenylate kinase</fullName>
        <shortName evidence="1">AK</shortName>
        <ecNumber evidence="1">2.7.4.3</ecNumber>
    </recommendedName>
    <alternativeName>
        <fullName evidence="1">ATP-AMP transphosphorylase</fullName>
    </alternativeName>
    <alternativeName>
        <fullName evidence="1">ATP:AMP phosphotransferase</fullName>
    </alternativeName>
    <alternativeName>
        <fullName evidence="1">Adenylate monophosphate kinase</fullName>
    </alternativeName>
</protein>
<accession>B0RP52</accession>
<organism>
    <name type="scientific">Xanthomonas campestris pv. campestris (strain B100)</name>
    <dbReference type="NCBI Taxonomy" id="509169"/>
    <lineage>
        <taxon>Bacteria</taxon>
        <taxon>Pseudomonadati</taxon>
        <taxon>Pseudomonadota</taxon>
        <taxon>Gammaproteobacteria</taxon>
        <taxon>Lysobacterales</taxon>
        <taxon>Lysobacteraceae</taxon>
        <taxon>Xanthomonas</taxon>
    </lineage>
</organism>
<proteinExistence type="inferred from homology"/>
<gene>
    <name evidence="1" type="primary">adk</name>
    <name type="ordered locus">xcc-b100_0892</name>
</gene>
<comment type="function">
    <text evidence="1">Catalyzes the reversible transfer of the terminal phosphate group between ATP and AMP. Plays an important role in cellular energy homeostasis and in adenine nucleotide metabolism.</text>
</comment>
<comment type="catalytic activity">
    <reaction evidence="1">
        <text>AMP + ATP = 2 ADP</text>
        <dbReference type="Rhea" id="RHEA:12973"/>
        <dbReference type="ChEBI" id="CHEBI:30616"/>
        <dbReference type="ChEBI" id="CHEBI:456215"/>
        <dbReference type="ChEBI" id="CHEBI:456216"/>
        <dbReference type="EC" id="2.7.4.3"/>
    </reaction>
</comment>
<comment type="pathway">
    <text evidence="1">Purine metabolism; AMP biosynthesis via salvage pathway; AMP from ADP: step 1/1.</text>
</comment>
<comment type="subunit">
    <text evidence="1">Monomer.</text>
</comment>
<comment type="subcellular location">
    <subcellularLocation>
        <location evidence="1">Cytoplasm</location>
    </subcellularLocation>
</comment>
<comment type="domain">
    <text evidence="1">Consists of three domains, a large central CORE domain and two small peripheral domains, NMPbind and LID, which undergo movements during catalysis. The LID domain closes over the site of phosphoryl transfer upon ATP binding. Assembling and dissambling the active center during each catalytic cycle provides an effective means to prevent ATP hydrolysis.</text>
</comment>
<comment type="similarity">
    <text evidence="1">Belongs to the adenylate kinase family.</text>
</comment>
<evidence type="ECO:0000255" key="1">
    <source>
        <dbReference type="HAMAP-Rule" id="MF_00235"/>
    </source>
</evidence>
<name>KAD_XANCB</name>
<reference key="1">
    <citation type="journal article" date="2008" name="J. Biotechnol.">
        <title>The genome of Xanthomonas campestris pv. campestris B100 and its use for the reconstruction of metabolic pathways involved in xanthan biosynthesis.</title>
        <authorList>
            <person name="Vorhoelter F.-J."/>
            <person name="Schneiker S."/>
            <person name="Goesmann A."/>
            <person name="Krause L."/>
            <person name="Bekel T."/>
            <person name="Kaiser O."/>
            <person name="Linke B."/>
            <person name="Patschkowski T."/>
            <person name="Rueckert C."/>
            <person name="Schmid J."/>
            <person name="Sidhu V.K."/>
            <person name="Sieber V."/>
            <person name="Tauch A."/>
            <person name="Watt S.A."/>
            <person name="Weisshaar B."/>
            <person name="Becker A."/>
            <person name="Niehaus K."/>
            <person name="Puehler A."/>
        </authorList>
    </citation>
    <scope>NUCLEOTIDE SEQUENCE [LARGE SCALE GENOMIC DNA]</scope>
    <source>
        <strain>B100</strain>
    </source>
</reference>
<sequence>MRLVLLGPPGSGKGTQAARLKDTFQIPHISTGDLLRAEVAAGSPLGVKAKEVMARGDLVSDEILLGMLEARLGQADVANGFILDGYPRNVAQANALDSLLSKIGQPLDAVVQLDVASELLVERIAGRAKAEGREDDNPESVRKRLQVYTDSTAPVIGFYEQRGKLARVDGVGSLDEVLKRIGQALGR</sequence>
<keyword id="KW-0067">ATP-binding</keyword>
<keyword id="KW-0963">Cytoplasm</keyword>
<keyword id="KW-0418">Kinase</keyword>
<keyword id="KW-0545">Nucleotide biosynthesis</keyword>
<keyword id="KW-0547">Nucleotide-binding</keyword>
<keyword id="KW-0808">Transferase</keyword>
<dbReference type="EC" id="2.7.4.3" evidence="1"/>
<dbReference type="EMBL" id="AM920689">
    <property type="protein sequence ID" value="CAP50237.1"/>
    <property type="molecule type" value="Genomic_DNA"/>
</dbReference>
<dbReference type="SMR" id="B0RP52"/>
<dbReference type="KEGG" id="xca:xcc-b100_0892"/>
<dbReference type="HOGENOM" id="CLU_032354_4_1_6"/>
<dbReference type="UniPathway" id="UPA00588">
    <property type="reaction ID" value="UER00649"/>
</dbReference>
<dbReference type="Proteomes" id="UP000001188">
    <property type="component" value="Chromosome"/>
</dbReference>
<dbReference type="GO" id="GO:0005737">
    <property type="term" value="C:cytoplasm"/>
    <property type="evidence" value="ECO:0007669"/>
    <property type="project" value="UniProtKB-SubCell"/>
</dbReference>
<dbReference type="GO" id="GO:0004017">
    <property type="term" value="F:adenylate kinase activity"/>
    <property type="evidence" value="ECO:0007669"/>
    <property type="project" value="UniProtKB-UniRule"/>
</dbReference>
<dbReference type="GO" id="GO:0005524">
    <property type="term" value="F:ATP binding"/>
    <property type="evidence" value="ECO:0007669"/>
    <property type="project" value="UniProtKB-UniRule"/>
</dbReference>
<dbReference type="GO" id="GO:0044209">
    <property type="term" value="P:AMP salvage"/>
    <property type="evidence" value="ECO:0007669"/>
    <property type="project" value="UniProtKB-UniRule"/>
</dbReference>
<dbReference type="CDD" id="cd01428">
    <property type="entry name" value="ADK"/>
    <property type="match status" value="1"/>
</dbReference>
<dbReference type="Gene3D" id="3.40.50.300">
    <property type="entry name" value="P-loop containing nucleotide triphosphate hydrolases"/>
    <property type="match status" value="1"/>
</dbReference>
<dbReference type="HAMAP" id="MF_00235">
    <property type="entry name" value="Adenylate_kinase_Adk"/>
    <property type="match status" value="1"/>
</dbReference>
<dbReference type="InterPro" id="IPR006259">
    <property type="entry name" value="Adenyl_kin_sub"/>
</dbReference>
<dbReference type="InterPro" id="IPR000850">
    <property type="entry name" value="Adenylat/UMP-CMP_kin"/>
</dbReference>
<dbReference type="InterPro" id="IPR033690">
    <property type="entry name" value="Adenylat_kinase_CS"/>
</dbReference>
<dbReference type="InterPro" id="IPR027417">
    <property type="entry name" value="P-loop_NTPase"/>
</dbReference>
<dbReference type="NCBIfam" id="TIGR01351">
    <property type="entry name" value="adk"/>
    <property type="match status" value="1"/>
</dbReference>
<dbReference type="NCBIfam" id="NF001381">
    <property type="entry name" value="PRK00279.1-3"/>
    <property type="match status" value="1"/>
</dbReference>
<dbReference type="NCBIfam" id="NF011100">
    <property type="entry name" value="PRK14527.1"/>
    <property type="match status" value="1"/>
</dbReference>
<dbReference type="NCBIfam" id="NF011101">
    <property type="entry name" value="PRK14528.1"/>
    <property type="match status" value="1"/>
</dbReference>
<dbReference type="NCBIfam" id="NF011104">
    <property type="entry name" value="PRK14531.1"/>
    <property type="match status" value="1"/>
</dbReference>
<dbReference type="NCBIfam" id="NF011105">
    <property type="entry name" value="PRK14532.1"/>
    <property type="match status" value="1"/>
</dbReference>
<dbReference type="PANTHER" id="PTHR23359">
    <property type="entry name" value="NUCLEOTIDE KINASE"/>
    <property type="match status" value="1"/>
</dbReference>
<dbReference type="Pfam" id="PF00406">
    <property type="entry name" value="ADK"/>
    <property type="match status" value="1"/>
</dbReference>
<dbReference type="PRINTS" id="PR00094">
    <property type="entry name" value="ADENYLTKNASE"/>
</dbReference>
<dbReference type="SUPFAM" id="SSF52540">
    <property type="entry name" value="P-loop containing nucleoside triphosphate hydrolases"/>
    <property type="match status" value="1"/>
</dbReference>
<dbReference type="PROSITE" id="PS00113">
    <property type="entry name" value="ADENYLATE_KINASE"/>
    <property type="match status" value="1"/>
</dbReference>
<feature type="chain" id="PRO_1000100627" description="Adenylate kinase">
    <location>
        <begin position="1"/>
        <end position="187"/>
    </location>
</feature>
<feature type="region of interest" description="NMP" evidence="1">
    <location>
        <begin position="30"/>
        <end position="59"/>
    </location>
</feature>
<feature type="region of interest" description="LID" evidence="1">
    <location>
        <begin position="126"/>
        <end position="136"/>
    </location>
</feature>
<feature type="binding site" evidence="1">
    <location>
        <begin position="10"/>
        <end position="15"/>
    </location>
    <ligand>
        <name>ATP</name>
        <dbReference type="ChEBI" id="CHEBI:30616"/>
    </ligand>
</feature>
<feature type="binding site" evidence="1">
    <location>
        <position position="31"/>
    </location>
    <ligand>
        <name>AMP</name>
        <dbReference type="ChEBI" id="CHEBI:456215"/>
    </ligand>
</feature>
<feature type="binding site" evidence="1">
    <location>
        <position position="36"/>
    </location>
    <ligand>
        <name>AMP</name>
        <dbReference type="ChEBI" id="CHEBI:456215"/>
    </ligand>
</feature>
<feature type="binding site" evidence="1">
    <location>
        <begin position="57"/>
        <end position="59"/>
    </location>
    <ligand>
        <name>AMP</name>
        <dbReference type="ChEBI" id="CHEBI:456215"/>
    </ligand>
</feature>
<feature type="binding site" evidence="1">
    <location>
        <begin position="85"/>
        <end position="88"/>
    </location>
    <ligand>
        <name>AMP</name>
        <dbReference type="ChEBI" id="CHEBI:456215"/>
    </ligand>
</feature>
<feature type="binding site" evidence="1">
    <location>
        <position position="92"/>
    </location>
    <ligand>
        <name>AMP</name>
        <dbReference type="ChEBI" id="CHEBI:456215"/>
    </ligand>
</feature>
<feature type="binding site" evidence="1">
    <location>
        <position position="127"/>
    </location>
    <ligand>
        <name>ATP</name>
        <dbReference type="ChEBI" id="CHEBI:30616"/>
    </ligand>
</feature>
<feature type="binding site" evidence="1">
    <location>
        <position position="133"/>
    </location>
    <ligand>
        <name>AMP</name>
        <dbReference type="ChEBI" id="CHEBI:456215"/>
    </ligand>
</feature>
<feature type="binding site" evidence="1">
    <location>
        <position position="144"/>
    </location>
    <ligand>
        <name>AMP</name>
        <dbReference type="ChEBI" id="CHEBI:456215"/>
    </ligand>
</feature>
<feature type="binding site" evidence="1">
    <location>
        <position position="172"/>
    </location>
    <ligand>
        <name>ATP</name>
        <dbReference type="ChEBI" id="CHEBI:30616"/>
    </ligand>
</feature>